<accession>Q3A8N7</accession>
<sequence length="258" mass="27974">MENCSSDAVVLHHFDYGEADRIVTLFSLEKGLIKGIARQARKSRKRFGAALEPFSTVHMRWQSRSGRDLVTLQDAELIDLRSGLRHNLLAMALAAYGCELVENLVGETGAQPPVYDLLTAFLTHVNHHGGSEEARLLLELRLLCLSGYAPHLVHCCKCGASFTSETVAFAASLGGSLCLDCVTGVDVQYLSLLSLGSLARALKAPLALFEGFRFGSQTLQQGGQVVSSMLRQQLTRPVKSLSFLSQLTEGSARVAAIR</sequence>
<comment type="function">
    <text evidence="1">Involved in DNA repair and RecF pathway recombination.</text>
</comment>
<comment type="similarity">
    <text evidence="1">Belongs to the RecO family.</text>
</comment>
<gene>
    <name evidence="1" type="primary">recO</name>
    <name type="ordered locus">Pcar_0597</name>
</gene>
<keyword id="KW-0227">DNA damage</keyword>
<keyword id="KW-0233">DNA recombination</keyword>
<keyword id="KW-0234">DNA repair</keyword>
<keyword id="KW-1185">Reference proteome</keyword>
<reference key="1">
    <citation type="submission" date="2005-10" db="EMBL/GenBank/DDBJ databases">
        <title>Complete sequence of Pelobacter carbinolicus DSM 2380.</title>
        <authorList>
            <person name="Copeland A."/>
            <person name="Lucas S."/>
            <person name="Lapidus A."/>
            <person name="Barry K."/>
            <person name="Detter J.C."/>
            <person name="Glavina T."/>
            <person name="Hammon N."/>
            <person name="Israni S."/>
            <person name="Pitluck S."/>
            <person name="Chertkov O."/>
            <person name="Schmutz J."/>
            <person name="Larimer F."/>
            <person name="Land M."/>
            <person name="Kyrpides N."/>
            <person name="Ivanova N."/>
            <person name="Richardson P."/>
        </authorList>
    </citation>
    <scope>NUCLEOTIDE SEQUENCE [LARGE SCALE GENOMIC DNA]</scope>
    <source>
        <strain>DSM 2380 / NBRC 103641 / GraBd1</strain>
    </source>
</reference>
<organism>
    <name type="scientific">Syntrophotalea carbinolica (strain DSM 2380 / NBRC 103641 / GraBd1)</name>
    <name type="common">Pelobacter carbinolicus</name>
    <dbReference type="NCBI Taxonomy" id="338963"/>
    <lineage>
        <taxon>Bacteria</taxon>
        <taxon>Pseudomonadati</taxon>
        <taxon>Thermodesulfobacteriota</taxon>
        <taxon>Desulfuromonadia</taxon>
        <taxon>Desulfuromonadales</taxon>
        <taxon>Syntrophotaleaceae</taxon>
        <taxon>Syntrophotalea</taxon>
    </lineage>
</organism>
<feature type="chain" id="PRO_0000227046" description="DNA repair protein RecO">
    <location>
        <begin position="1"/>
        <end position="258"/>
    </location>
</feature>
<protein>
    <recommendedName>
        <fullName evidence="1">DNA repair protein RecO</fullName>
    </recommendedName>
    <alternativeName>
        <fullName evidence="1">Recombination protein O</fullName>
    </alternativeName>
</protein>
<evidence type="ECO:0000255" key="1">
    <source>
        <dbReference type="HAMAP-Rule" id="MF_00201"/>
    </source>
</evidence>
<proteinExistence type="inferred from homology"/>
<dbReference type="EMBL" id="CP000142">
    <property type="protein sequence ID" value="ABA87856.1"/>
    <property type="molecule type" value="Genomic_DNA"/>
</dbReference>
<dbReference type="RefSeq" id="WP_011340297.1">
    <property type="nucleotide sequence ID" value="NC_007498.2"/>
</dbReference>
<dbReference type="SMR" id="Q3A8N7"/>
<dbReference type="STRING" id="338963.Pcar_0597"/>
<dbReference type="KEGG" id="pca:Pcar_0597"/>
<dbReference type="eggNOG" id="COG1381">
    <property type="taxonomic scope" value="Bacteria"/>
</dbReference>
<dbReference type="HOGENOM" id="CLU_066632_2_0_7"/>
<dbReference type="OrthoDB" id="9780797at2"/>
<dbReference type="Proteomes" id="UP000002534">
    <property type="component" value="Chromosome"/>
</dbReference>
<dbReference type="GO" id="GO:0043590">
    <property type="term" value="C:bacterial nucleoid"/>
    <property type="evidence" value="ECO:0007669"/>
    <property type="project" value="TreeGrafter"/>
</dbReference>
<dbReference type="GO" id="GO:0006310">
    <property type="term" value="P:DNA recombination"/>
    <property type="evidence" value="ECO:0007669"/>
    <property type="project" value="UniProtKB-UniRule"/>
</dbReference>
<dbReference type="GO" id="GO:0006302">
    <property type="term" value="P:double-strand break repair"/>
    <property type="evidence" value="ECO:0007669"/>
    <property type="project" value="TreeGrafter"/>
</dbReference>
<dbReference type="Gene3D" id="2.40.50.140">
    <property type="entry name" value="Nucleic acid-binding proteins"/>
    <property type="match status" value="1"/>
</dbReference>
<dbReference type="Gene3D" id="1.20.1440.120">
    <property type="entry name" value="Recombination protein O, C-terminal domain"/>
    <property type="match status" value="1"/>
</dbReference>
<dbReference type="HAMAP" id="MF_00201">
    <property type="entry name" value="RecO"/>
    <property type="match status" value="1"/>
</dbReference>
<dbReference type="InterPro" id="IPR037278">
    <property type="entry name" value="ARFGAP/RecO"/>
</dbReference>
<dbReference type="InterPro" id="IPR022572">
    <property type="entry name" value="DNA_rep/recomb_RecO_N"/>
</dbReference>
<dbReference type="InterPro" id="IPR012340">
    <property type="entry name" value="NA-bd_OB-fold"/>
</dbReference>
<dbReference type="InterPro" id="IPR003717">
    <property type="entry name" value="RecO"/>
</dbReference>
<dbReference type="InterPro" id="IPR042242">
    <property type="entry name" value="RecO_C"/>
</dbReference>
<dbReference type="NCBIfam" id="TIGR00613">
    <property type="entry name" value="reco"/>
    <property type="match status" value="1"/>
</dbReference>
<dbReference type="PANTHER" id="PTHR33991">
    <property type="entry name" value="DNA REPAIR PROTEIN RECO"/>
    <property type="match status" value="1"/>
</dbReference>
<dbReference type="PANTHER" id="PTHR33991:SF1">
    <property type="entry name" value="DNA REPAIR PROTEIN RECO"/>
    <property type="match status" value="1"/>
</dbReference>
<dbReference type="Pfam" id="PF02565">
    <property type="entry name" value="RecO_C"/>
    <property type="match status" value="1"/>
</dbReference>
<dbReference type="Pfam" id="PF11967">
    <property type="entry name" value="RecO_N"/>
    <property type="match status" value="1"/>
</dbReference>
<dbReference type="SUPFAM" id="SSF57863">
    <property type="entry name" value="ArfGap/RecO-like zinc finger"/>
    <property type="match status" value="1"/>
</dbReference>
<dbReference type="SUPFAM" id="SSF50249">
    <property type="entry name" value="Nucleic acid-binding proteins"/>
    <property type="match status" value="1"/>
</dbReference>
<name>RECO_SYNC1</name>